<protein>
    <recommendedName>
        <fullName evidence="1">Imidazole glycerol phosphate synthase subunit HisH</fullName>
        <ecNumber evidence="1">4.3.2.10</ecNumber>
    </recommendedName>
    <alternativeName>
        <fullName evidence="1">IGP synthase glutaminase subunit</fullName>
        <ecNumber evidence="1">3.5.1.2</ecNumber>
    </alternativeName>
    <alternativeName>
        <fullName evidence="1">IGP synthase subunit HisH</fullName>
    </alternativeName>
    <alternativeName>
        <fullName evidence="1">ImGP synthase subunit HisH</fullName>
        <shortName evidence="1">IGPS subunit HisH</shortName>
    </alternativeName>
</protein>
<name>HIS5_RHORT</name>
<organism>
    <name type="scientific">Rhodospirillum rubrum (strain ATCC 11170 / ATH 1.1.1 / DSM 467 / LMG 4362 / NCIMB 8255 / S1)</name>
    <dbReference type="NCBI Taxonomy" id="269796"/>
    <lineage>
        <taxon>Bacteria</taxon>
        <taxon>Pseudomonadati</taxon>
        <taxon>Pseudomonadota</taxon>
        <taxon>Alphaproteobacteria</taxon>
        <taxon>Rhodospirillales</taxon>
        <taxon>Rhodospirillaceae</taxon>
        <taxon>Rhodospirillum</taxon>
    </lineage>
</organism>
<gene>
    <name evidence="1" type="primary">hisH</name>
    <name type="ordered locus">Rru_A3596</name>
</gene>
<comment type="function">
    <text evidence="1">IGPS catalyzes the conversion of PRFAR and glutamine to IGP, AICAR and glutamate. The HisH subunit catalyzes the hydrolysis of glutamine to glutamate and ammonia as part of the synthesis of IGP and AICAR. The resulting ammonia molecule is channeled to the active site of HisF.</text>
</comment>
<comment type="catalytic activity">
    <reaction evidence="1">
        <text>5-[(5-phospho-1-deoxy-D-ribulos-1-ylimino)methylamino]-1-(5-phospho-beta-D-ribosyl)imidazole-4-carboxamide + L-glutamine = D-erythro-1-(imidazol-4-yl)glycerol 3-phosphate + 5-amino-1-(5-phospho-beta-D-ribosyl)imidazole-4-carboxamide + L-glutamate + H(+)</text>
        <dbReference type="Rhea" id="RHEA:24793"/>
        <dbReference type="ChEBI" id="CHEBI:15378"/>
        <dbReference type="ChEBI" id="CHEBI:29985"/>
        <dbReference type="ChEBI" id="CHEBI:58278"/>
        <dbReference type="ChEBI" id="CHEBI:58359"/>
        <dbReference type="ChEBI" id="CHEBI:58475"/>
        <dbReference type="ChEBI" id="CHEBI:58525"/>
        <dbReference type="EC" id="4.3.2.10"/>
    </reaction>
</comment>
<comment type="catalytic activity">
    <reaction evidence="1">
        <text>L-glutamine + H2O = L-glutamate + NH4(+)</text>
        <dbReference type="Rhea" id="RHEA:15889"/>
        <dbReference type="ChEBI" id="CHEBI:15377"/>
        <dbReference type="ChEBI" id="CHEBI:28938"/>
        <dbReference type="ChEBI" id="CHEBI:29985"/>
        <dbReference type="ChEBI" id="CHEBI:58359"/>
        <dbReference type="EC" id="3.5.1.2"/>
    </reaction>
</comment>
<comment type="pathway">
    <text evidence="1">Amino-acid biosynthesis; L-histidine biosynthesis; L-histidine from 5-phospho-alpha-D-ribose 1-diphosphate: step 5/9.</text>
</comment>
<comment type="subunit">
    <text evidence="1">Heterodimer of HisH and HisF.</text>
</comment>
<comment type="subcellular location">
    <subcellularLocation>
        <location evidence="1">Cytoplasm</location>
    </subcellularLocation>
</comment>
<accession>Q2RNA5</accession>
<reference key="1">
    <citation type="journal article" date="2011" name="Stand. Genomic Sci.">
        <title>Complete genome sequence of Rhodospirillum rubrum type strain (S1).</title>
        <authorList>
            <person name="Munk A.C."/>
            <person name="Copeland A."/>
            <person name="Lucas S."/>
            <person name="Lapidus A."/>
            <person name="Del Rio T.G."/>
            <person name="Barry K."/>
            <person name="Detter J.C."/>
            <person name="Hammon N."/>
            <person name="Israni S."/>
            <person name="Pitluck S."/>
            <person name="Brettin T."/>
            <person name="Bruce D."/>
            <person name="Han C."/>
            <person name="Tapia R."/>
            <person name="Gilna P."/>
            <person name="Schmutz J."/>
            <person name="Larimer F."/>
            <person name="Land M."/>
            <person name="Kyrpides N.C."/>
            <person name="Mavromatis K."/>
            <person name="Richardson P."/>
            <person name="Rohde M."/>
            <person name="Goeker M."/>
            <person name="Klenk H.P."/>
            <person name="Zhang Y."/>
            <person name="Roberts G.P."/>
            <person name="Reslewic S."/>
            <person name="Schwartz D.C."/>
        </authorList>
    </citation>
    <scope>NUCLEOTIDE SEQUENCE [LARGE SCALE GENOMIC DNA]</scope>
    <source>
        <strain>ATCC 11170 / ATH 1.1.1 / DSM 467 / LMG 4362 / NCIMB 8255 / S1</strain>
    </source>
</reference>
<dbReference type="EC" id="4.3.2.10" evidence="1"/>
<dbReference type="EC" id="3.5.1.2" evidence="1"/>
<dbReference type="EMBL" id="CP000230">
    <property type="protein sequence ID" value="ABC24390.1"/>
    <property type="molecule type" value="Genomic_DNA"/>
</dbReference>
<dbReference type="RefSeq" id="WP_011391343.1">
    <property type="nucleotide sequence ID" value="NC_007643.1"/>
</dbReference>
<dbReference type="RefSeq" id="YP_428677.1">
    <property type="nucleotide sequence ID" value="NC_007643.1"/>
</dbReference>
<dbReference type="SMR" id="Q2RNA5"/>
<dbReference type="STRING" id="269796.Rru_A3596"/>
<dbReference type="EnsemblBacteria" id="ABC24390">
    <property type="protein sequence ID" value="ABC24390"/>
    <property type="gene ID" value="Rru_A3596"/>
</dbReference>
<dbReference type="KEGG" id="rru:Rru_A3596"/>
<dbReference type="PATRIC" id="fig|269796.9.peg.3717"/>
<dbReference type="eggNOG" id="COG0118">
    <property type="taxonomic scope" value="Bacteria"/>
</dbReference>
<dbReference type="HOGENOM" id="CLU_071837_2_0_5"/>
<dbReference type="PhylomeDB" id="Q2RNA5"/>
<dbReference type="UniPathway" id="UPA00031">
    <property type="reaction ID" value="UER00010"/>
</dbReference>
<dbReference type="Proteomes" id="UP000001929">
    <property type="component" value="Chromosome"/>
</dbReference>
<dbReference type="GO" id="GO:0005737">
    <property type="term" value="C:cytoplasm"/>
    <property type="evidence" value="ECO:0007669"/>
    <property type="project" value="UniProtKB-SubCell"/>
</dbReference>
<dbReference type="GO" id="GO:0004359">
    <property type="term" value="F:glutaminase activity"/>
    <property type="evidence" value="ECO:0007669"/>
    <property type="project" value="UniProtKB-EC"/>
</dbReference>
<dbReference type="GO" id="GO:0000107">
    <property type="term" value="F:imidazoleglycerol-phosphate synthase activity"/>
    <property type="evidence" value="ECO:0007669"/>
    <property type="project" value="UniProtKB-UniRule"/>
</dbReference>
<dbReference type="GO" id="GO:0016829">
    <property type="term" value="F:lyase activity"/>
    <property type="evidence" value="ECO:0007669"/>
    <property type="project" value="UniProtKB-KW"/>
</dbReference>
<dbReference type="GO" id="GO:0000105">
    <property type="term" value="P:L-histidine biosynthetic process"/>
    <property type="evidence" value="ECO:0007669"/>
    <property type="project" value="UniProtKB-UniRule"/>
</dbReference>
<dbReference type="CDD" id="cd01748">
    <property type="entry name" value="GATase1_IGP_Synthase"/>
    <property type="match status" value="1"/>
</dbReference>
<dbReference type="Gene3D" id="3.40.50.880">
    <property type="match status" value="1"/>
</dbReference>
<dbReference type="HAMAP" id="MF_00278">
    <property type="entry name" value="HisH"/>
    <property type="match status" value="1"/>
</dbReference>
<dbReference type="InterPro" id="IPR029062">
    <property type="entry name" value="Class_I_gatase-like"/>
</dbReference>
<dbReference type="InterPro" id="IPR017926">
    <property type="entry name" value="GATASE"/>
</dbReference>
<dbReference type="InterPro" id="IPR010139">
    <property type="entry name" value="Imidazole-glycPsynth_HisH"/>
</dbReference>
<dbReference type="NCBIfam" id="TIGR01855">
    <property type="entry name" value="IMP_synth_hisH"/>
    <property type="match status" value="1"/>
</dbReference>
<dbReference type="PANTHER" id="PTHR42701">
    <property type="entry name" value="IMIDAZOLE GLYCEROL PHOSPHATE SYNTHASE SUBUNIT HISH"/>
    <property type="match status" value="1"/>
</dbReference>
<dbReference type="PANTHER" id="PTHR42701:SF1">
    <property type="entry name" value="IMIDAZOLE GLYCEROL PHOSPHATE SYNTHASE SUBUNIT HISH"/>
    <property type="match status" value="1"/>
</dbReference>
<dbReference type="Pfam" id="PF00117">
    <property type="entry name" value="GATase"/>
    <property type="match status" value="1"/>
</dbReference>
<dbReference type="PIRSF" id="PIRSF000495">
    <property type="entry name" value="Amidotransf_hisH"/>
    <property type="match status" value="1"/>
</dbReference>
<dbReference type="SUPFAM" id="SSF52317">
    <property type="entry name" value="Class I glutamine amidotransferase-like"/>
    <property type="match status" value="1"/>
</dbReference>
<dbReference type="PROSITE" id="PS51273">
    <property type="entry name" value="GATASE_TYPE_1"/>
    <property type="match status" value="1"/>
</dbReference>
<proteinExistence type="inferred from homology"/>
<feature type="chain" id="PRO_0000231754" description="Imidazole glycerol phosphate synthase subunit HisH">
    <location>
        <begin position="1"/>
        <end position="214"/>
    </location>
</feature>
<feature type="domain" description="Glutamine amidotransferase type-1" evidence="1">
    <location>
        <begin position="2"/>
        <end position="214"/>
    </location>
</feature>
<feature type="active site" description="Nucleophile" evidence="1">
    <location>
        <position position="88"/>
    </location>
</feature>
<feature type="active site" evidence="1">
    <location>
        <position position="194"/>
    </location>
</feature>
<feature type="active site" evidence="1">
    <location>
        <position position="196"/>
    </location>
</feature>
<evidence type="ECO:0000255" key="1">
    <source>
        <dbReference type="HAMAP-Rule" id="MF_00278"/>
    </source>
</evidence>
<sequence>MRVALIDYGSGNLRSAAKALERAARDGGVAAEIVVTRDVEGVLGADRVVLPGVGAFANCRRGLQGIDGMVEALAEVALVRARPFLGICVGMQLLADEGVEYGRHPGLGWIGGTVEAISPADPALKIPHMGWNSLDFQADSHALLAGIEPGTHVYFVHSYHFRPADPATRLASVEYGGPLTAMIGRENLVGTQFHPEKSQAAGLRLIANFLRWAP</sequence>
<keyword id="KW-0028">Amino-acid biosynthesis</keyword>
<keyword id="KW-0963">Cytoplasm</keyword>
<keyword id="KW-0315">Glutamine amidotransferase</keyword>
<keyword id="KW-0368">Histidine biosynthesis</keyword>
<keyword id="KW-0378">Hydrolase</keyword>
<keyword id="KW-0456">Lyase</keyword>
<keyword id="KW-1185">Reference proteome</keyword>